<gene>
    <name evidence="1" type="primary">yidZ</name>
    <name type="ordered locus">EcHS_A3925</name>
</gene>
<evidence type="ECO:0000255" key="1">
    <source>
        <dbReference type="HAMAP-Rule" id="MF_01607"/>
    </source>
</evidence>
<evidence type="ECO:0000305" key="2"/>
<accession>A8A6H3</accession>
<proteinExistence type="inferred from homology"/>
<comment type="function">
    <text evidence="1">Involved in anaerobic NO protection.</text>
</comment>
<comment type="similarity">
    <text evidence="2">Belongs to the LysR transcriptional regulatory family.</text>
</comment>
<reference key="1">
    <citation type="journal article" date="2008" name="J. Bacteriol.">
        <title>The pangenome structure of Escherichia coli: comparative genomic analysis of E. coli commensal and pathogenic isolates.</title>
        <authorList>
            <person name="Rasko D.A."/>
            <person name="Rosovitz M.J."/>
            <person name="Myers G.S.A."/>
            <person name="Mongodin E.F."/>
            <person name="Fricke W.F."/>
            <person name="Gajer P."/>
            <person name="Crabtree J."/>
            <person name="Sebaihia M."/>
            <person name="Thomson N.R."/>
            <person name="Chaudhuri R."/>
            <person name="Henderson I.R."/>
            <person name="Sperandio V."/>
            <person name="Ravel J."/>
        </authorList>
    </citation>
    <scope>NUCLEOTIDE SEQUENCE [LARGE SCALE GENOMIC DNA]</scope>
    <source>
        <strain>HS</strain>
    </source>
</reference>
<organism>
    <name type="scientific">Escherichia coli O9:H4 (strain HS)</name>
    <dbReference type="NCBI Taxonomy" id="331112"/>
    <lineage>
        <taxon>Bacteria</taxon>
        <taxon>Pseudomonadati</taxon>
        <taxon>Pseudomonadota</taxon>
        <taxon>Gammaproteobacteria</taxon>
        <taxon>Enterobacterales</taxon>
        <taxon>Enterobacteriaceae</taxon>
        <taxon>Escherichia</taxon>
    </lineage>
</organism>
<keyword id="KW-0238">DNA-binding</keyword>
<keyword id="KW-0804">Transcription</keyword>
<keyword id="KW-0805">Transcription regulation</keyword>
<sequence>MKKSITTLDLNLLLCLQLLMQERSVTKAAKRMNVTPSAVSKSLAKLRAWFDDPLFVNSPLGLSPTPLMVSMEQNLAEWMQMSNLLLDKPHHQTPRGLKFELAAESPLMMIMLNALSKRIYQRYPQATIKLRNWDYDSLDAITRGEVDIGFSGRESHPRSRELLSSLPLAIDYEVLFSDVPCVWLRKDHPALHETWNLDTFLRYPHISICWEQSDTWALDNVLQELGRERTIAMSLPEFEQSLFMAAQPDNLLLATAPRYCQYYNQLHQLPLVALPLPFDESQQKKLEVPFTLLWHKRNSHNPKIVWLRETIKNLYASMA</sequence>
<feature type="chain" id="PRO_1000069424" description="HTH-type transcriptional regulator YidZ">
    <location>
        <begin position="1"/>
        <end position="319"/>
    </location>
</feature>
<feature type="domain" description="HTH lysR-type" evidence="1">
    <location>
        <begin position="8"/>
        <end position="65"/>
    </location>
</feature>
<feature type="DNA-binding region" description="H-T-H motif" evidence="1">
    <location>
        <begin position="25"/>
        <end position="44"/>
    </location>
</feature>
<name>YIDZ_ECOHS</name>
<dbReference type="EMBL" id="CP000802">
    <property type="protein sequence ID" value="ABV08127.1"/>
    <property type="molecule type" value="Genomic_DNA"/>
</dbReference>
<dbReference type="RefSeq" id="WP_000748502.1">
    <property type="nucleotide sequence ID" value="NC_009800.1"/>
</dbReference>
<dbReference type="SMR" id="A8A6H3"/>
<dbReference type="GeneID" id="93778452"/>
<dbReference type="KEGG" id="ecx:EcHS_A3925"/>
<dbReference type="HOGENOM" id="CLU_039613_39_2_6"/>
<dbReference type="GO" id="GO:0003677">
    <property type="term" value="F:DNA binding"/>
    <property type="evidence" value="ECO:0007669"/>
    <property type="project" value="UniProtKB-KW"/>
</dbReference>
<dbReference type="GO" id="GO:0003700">
    <property type="term" value="F:DNA-binding transcription factor activity"/>
    <property type="evidence" value="ECO:0007669"/>
    <property type="project" value="UniProtKB-UniRule"/>
</dbReference>
<dbReference type="CDD" id="cd08417">
    <property type="entry name" value="PBP2_Nitroaromatics_like"/>
    <property type="match status" value="1"/>
</dbReference>
<dbReference type="FunFam" id="3.40.190.10:FF:000092">
    <property type="entry name" value="HTH-type transcriptional regulator YidZ"/>
    <property type="match status" value="1"/>
</dbReference>
<dbReference type="Gene3D" id="3.40.190.10">
    <property type="entry name" value="Periplasmic binding protein-like II"/>
    <property type="match status" value="2"/>
</dbReference>
<dbReference type="Gene3D" id="1.10.10.10">
    <property type="entry name" value="Winged helix-like DNA-binding domain superfamily/Winged helix DNA-binding domain"/>
    <property type="match status" value="1"/>
</dbReference>
<dbReference type="HAMAP" id="MF_01607">
    <property type="entry name" value="HTH_type_YidZ"/>
    <property type="match status" value="1"/>
</dbReference>
<dbReference type="InterPro" id="IPR050389">
    <property type="entry name" value="LysR-type_TF"/>
</dbReference>
<dbReference type="InterPro" id="IPR005119">
    <property type="entry name" value="LysR_subst-bd"/>
</dbReference>
<dbReference type="InterPro" id="IPR000847">
    <property type="entry name" value="Tscrpt_reg_HTH_LysR"/>
</dbReference>
<dbReference type="InterPro" id="IPR023746">
    <property type="entry name" value="Tscrpt_reg_YidZ"/>
</dbReference>
<dbReference type="InterPro" id="IPR036388">
    <property type="entry name" value="WH-like_DNA-bd_sf"/>
</dbReference>
<dbReference type="InterPro" id="IPR036390">
    <property type="entry name" value="WH_DNA-bd_sf"/>
</dbReference>
<dbReference type="InterPro" id="IPR037402">
    <property type="entry name" value="YidZ_PBP2"/>
</dbReference>
<dbReference type="NCBIfam" id="NF007581">
    <property type="entry name" value="PRK10216.1"/>
    <property type="match status" value="1"/>
</dbReference>
<dbReference type="PANTHER" id="PTHR30118">
    <property type="entry name" value="HTH-TYPE TRANSCRIPTIONAL REGULATOR LEUO-RELATED"/>
    <property type="match status" value="1"/>
</dbReference>
<dbReference type="PANTHER" id="PTHR30118:SF11">
    <property type="entry name" value="HTH-TYPE TRANSCRIPTIONAL REGULATOR YIDZ"/>
    <property type="match status" value="1"/>
</dbReference>
<dbReference type="Pfam" id="PF00126">
    <property type="entry name" value="HTH_1"/>
    <property type="match status" value="1"/>
</dbReference>
<dbReference type="Pfam" id="PF03466">
    <property type="entry name" value="LysR_substrate"/>
    <property type="match status" value="1"/>
</dbReference>
<dbReference type="SUPFAM" id="SSF53850">
    <property type="entry name" value="Periplasmic binding protein-like II"/>
    <property type="match status" value="1"/>
</dbReference>
<dbReference type="SUPFAM" id="SSF46785">
    <property type="entry name" value="Winged helix' DNA-binding domain"/>
    <property type="match status" value="1"/>
</dbReference>
<dbReference type="PROSITE" id="PS50931">
    <property type="entry name" value="HTH_LYSR"/>
    <property type="match status" value="1"/>
</dbReference>
<protein>
    <recommendedName>
        <fullName evidence="1">HTH-type transcriptional regulator YidZ</fullName>
    </recommendedName>
</protein>